<accession>B1L7Y7</accession>
<evidence type="ECO:0000255" key="1">
    <source>
        <dbReference type="HAMAP-Rule" id="MF_00041"/>
    </source>
</evidence>
<gene>
    <name evidence="1" type="primary">cysS</name>
    <name type="ordered locus">TRQ2_0208</name>
</gene>
<dbReference type="EC" id="6.1.1.16" evidence="1"/>
<dbReference type="EMBL" id="CP000969">
    <property type="protein sequence ID" value="ACB08568.1"/>
    <property type="molecule type" value="Genomic_DNA"/>
</dbReference>
<dbReference type="RefSeq" id="WP_011942893.1">
    <property type="nucleotide sequence ID" value="NC_010483.1"/>
</dbReference>
<dbReference type="SMR" id="B1L7Y7"/>
<dbReference type="KEGG" id="trq:TRQ2_0208"/>
<dbReference type="HOGENOM" id="CLU_013528_0_1_0"/>
<dbReference type="Proteomes" id="UP000001687">
    <property type="component" value="Chromosome"/>
</dbReference>
<dbReference type="GO" id="GO:0005829">
    <property type="term" value="C:cytosol"/>
    <property type="evidence" value="ECO:0007669"/>
    <property type="project" value="TreeGrafter"/>
</dbReference>
<dbReference type="GO" id="GO:0005524">
    <property type="term" value="F:ATP binding"/>
    <property type="evidence" value="ECO:0007669"/>
    <property type="project" value="UniProtKB-UniRule"/>
</dbReference>
<dbReference type="GO" id="GO:0004817">
    <property type="term" value="F:cysteine-tRNA ligase activity"/>
    <property type="evidence" value="ECO:0007669"/>
    <property type="project" value="UniProtKB-UniRule"/>
</dbReference>
<dbReference type="GO" id="GO:0008270">
    <property type="term" value="F:zinc ion binding"/>
    <property type="evidence" value="ECO:0007669"/>
    <property type="project" value="UniProtKB-UniRule"/>
</dbReference>
<dbReference type="GO" id="GO:0006423">
    <property type="term" value="P:cysteinyl-tRNA aminoacylation"/>
    <property type="evidence" value="ECO:0007669"/>
    <property type="project" value="UniProtKB-UniRule"/>
</dbReference>
<dbReference type="CDD" id="cd00672">
    <property type="entry name" value="CysRS_core"/>
    <property type="match status" value="1"/>
</dbReference>
<dbReference type="FunFam" id="3.40.50.620:FF:000068">
    <property type="entry name" value="Cysteine--tRNA ligase"/>
    <property type="match status" value="1"/>
</dbReference>
<dbReference type="Gene3D" id="1.20.120.1910">
    <property type="entry name" value="Cysteine-tRNA ligase, C-terminal anti-codon recognition domain"/>
    <property type="match status" value="1"/>
</dbReference>
<dbReference type="Gene3D" id="3.40.50.620">
    <property type="entry name" value="HUPs"/>
    <property type="match status" value="1"/>
</dbReference>
<dbReference type="HAMAP" id="MF_00041">
    <property type="entry name" value="Cys_tRNA_synth"/>
    <property type="match status" value="1"/>
</dbReference>
<dbReference type="InterPro" id="IPR015803">
    <property type="entry name" value="Cys-tRNA-ligase"/>
</dbReference>
<dbReference type="InterPro" id="IPR015273">
    <property type="entry name" value="Cys-tRNA-synt_Ia_DALR"/>
</dbReference>
<dbReference type="InterPro" id="IPR024909">
    <property type="entry name" value="Cys-tRNA/MSH_ligase"/>
</dbReference>
<dbReference type="InterPro" id="IPR014729">
    <property type="entry name" value="Rossmann-like_a/b/a_fold"/>
</dbReference>
<dbReference type="InterPro" id="IPR032678">
    <property type="entry name" value="tRNA-synt_1_cat_dom"/>
</dbReference>
<dbReference type="InterPro" id="IPR009080">
    <property type="entry name" value="tRNAsynth_Ia_anticodon-bd"/>
</dbReference>
<dbReference type="NCBIfam" id="TIGR00435">
    <property type="entry name" value="cysS"/>
    <property type="match status" value="1"/>
</dbReference>
<dbReference type="PANTHER" id="PTHR10890:SF3">
    <property type="entry name" value="CYSTEINE--TRNA LIGASE, CYTOPLASMIC"/>
    <property type="match status" value="1"/>
</dbReference>
<dbReference type="PANTHER" id="PTHR10890">
    <property type="entry name" value="CYSTEINYL-TRNA SYNTHETASE"/>
    <property type="match status" value="1"/>
</dbReference>
<dbReference type="Pfam" id="PF09190">
    <property type="entry name" value="DALR_2"/>
    <property type="match status" value="1"/>
</dbReference>
<dbReference type="Pfam" id="PF01406">
    <property type="entry name" value="tRNA-synt_1e"/>
    <property type="match status" value="1"/>
</dbReference>
<dbReference type="PRINTS" id="PR00983">
    <property type="entry name" value="TRNASYNTHCYS"/>
</dbReference>
<dbReference type="SMART" id="SM00840">
    <property type="entry name" value="DALR_2"/>
    <property type="match status" value="1"/>
</dbReference>
<dbReference type="SUPFAM" id="SSF47323">
    <property type="entry name" value="Anticodon-binding domain of a subclass of class I aminoacyl-tRNA synthetases"/>
    <property type="match status" value="1"/>
</dbReference>
<dbReference type="SUPFAM" id="SSF52374">
    <property type="entry name" value="Nucleotidylyl transferase"/>
    <property type="match status" value="1"/>
</dbReference>
<protein>
    <recommendedName>
        <fullName evidence="1">Cysteine--tRNA ligase</fullName>
        <ecNumber evidence="1">6.1.1.16</ecNumber>
    </recommendedName>
    <alternativeName>
        <fullName evidence="1">Cysteinyl-tRNA synthetase</fullName>
        <shortName evidence="1">CysRS</shortName>
    </alternativeName>
</protein>
<proteinExistence type="inferred from homology"/>
<comment type="catalytic activity">
    <reaction evidence="1">
        <text>tRNA(Cys) + L-cysteine + ATP = L-cysteinyl-tRNA(Cys) + AMP + diphosphate</text>
        <dbReference type="Rhea" id="RHEA:17773"/>
        <dbReference type="Rhea" id="RHEA-COMP:9661"/>
        <dbReference type="Rhea" id="RHEA-COMP:9679"/>
        <dbReference type="ChEBI" id="CHEBI:30616"/>
        <dbReference type="ChEBI" id="CHEBI:33019"/>
        <dbReference type="ChEBI" id="CHEBI:35235"/>
        <dbReference type="ChEBI" id="CHEBI:78442"/>
        <dbReference type="ChEBI" id="CHEBI:78517"/>
        <dbReference type="ChEBI" id="CHEBI:456215"/>
        <dbReference type="EC" id="6.1.1.16"/>
    </reaction>
</comment>
<comment type="cofactor">
    <cofactor evidence="1">
        <name>Zn(2+)</name>
        <dbReference type="ChEBI" id="CHEBI:29105"/>
    </cofactor>
    <text evidence="1">Binds 1 zinc ion per subunit.</text>
</comment>
<comment type="subunit">
    <text evidence="1">Monomer.</text>
</comment>
<comment type="subcellular location">
    <subcellularLocation>
        <location evidence="1">Cytoplasm</location>
    </subcellularLocation>
</comment>
<comment type="similarity">
    <text evidence="1">Belongs to the class-I aminoacyl-tRNA synthetase family.</text>
</comment>
<name>SYC_THESQ</name>
<sequence length="460" mass="53411">MRITNTLTGKKEEFVPIQPGVVRMYVCGPTVYDLIHVGNARPAVVFDVFRRYLEYRGYRVIMVQNFTDIDDKIINKANQLGVDYKTVADTFIAEYWRDAHALGIRPANFHPRTTDFVDDIVEIIERLVEKGVAYQTETGVYFDVRKFEKYGELSKKKIEDLIAGARVEVDETKKFPLDFSLWKKAKPGEPCWKSPWGEGRPGWHIECTVMSVKILGESFDIHAGGEDLVFPHHENEKAQAEALTGKVFARYWMHNGMVRFLGDKMSKSTGNIFTVREAVKRYGRDGLRYMILSKHYRSPMDFSEELLQDYSRAVKRVWEILGRYEKSGDIGIPKRNAVYEEYVNRFVEALDDDFNTPVAVSLIFELARNLSKAMDDNDREDALLYYHLIRREFGPVLGLFDLNEEKKEVSSEELLKLLIEVRDVLRKEKRYDLSDRIRDHLREIGIILKDTPSGTEYTVE</sequence>
<feature type="chain" id="PRO_1000090885" description="Cysteine--tRNA ligase">
    <location>
        <begin position="1"/>
        <end position="460"/>
    </location>
</feature>
<feature type="short sequence motif" description="'HIGH' region">
    <location>
        <begin position="29"/>
        <end position="39"/>
    </location>
</feature>
<feature type="short sequence motif" description="'KMSKS' region">
    <location>
        <begin position="264"/>
        <end position="268"/>
    </location>
</feature>
<feature type="binding site" evidence="1">
    <location>
        <position position="27"/>
    </location>
    <ligand>
        <name>Zn(2+)</name>
        <dbReference type="ChEBI" id="CHEBI:29105"/>
    </ligand>
</feature>
<feature type="binding site" evidence="1">
    <location>
        <position position="207"/>
    </location>
    <ligand>
        <name>Zn(2+)</name>
        <dbReference type="ChEBI" id="CHEBI:29105"/>
    </ligand>
</feature>
<feature type="binding site" evidence="1">
    <location>
        <position position="232"/>
    </location>
    <ligand>
        <name>Zn(2+)</name>
        <dbReference type="ChEBI" id="CHEBI:29105"/>
    </ligand>
</feature>
<feature type="binding site" evidence="1">
    <location>
        <position position="236"/>
    </location>
    <ligand>
        <name>Zn(2+)</name>
        <dbReference type="ChEBI" id="CHEBI:29105"/>
    </ligand>
</feature>
<feature type="binding site" evidence="1">
    <location>
        <position position="267"/>
    </location>
    <ligand>
        <name>ATP</name>
        <dbReference type="ChEBI" id="CHEBI:30616"/>
    </ligand>
</feature>
<keyword id="KW-0030">Aminoacyl-tRNA synthetase</keyword>
<keyword id="KW-0067">ATP-binding</keyword>
<keyword id="KW-0963">Cytoplasm</keyword>
<keyword id="KW-0436">Ligase</keyword>
<keyword id="KW-0479">Metal-binding</keyword>
<keyword id="KW-0547">Nucleotide-binding</keyword>
<keyword id="KW-0648">Protein biosynthesis</keyword>
<keyword id="KW-0862">Zinc</keyword>
<reference key="1">
    <citation type="journal article" date="2011" name="J. Bacteriol.">
        <title>Genome sequence of Thermotoga sp. strain RQ2, a hyperthermophilic bacterium isolated from a geothermally heated region of the seafloor near Ribeira Quente, the Azores.</title>
        <authorList>
            <person name="Swithers K.S."/>
            <person name="DiPippo J.L."/>
            <person name="Bruce D.C."/>
            <person name="Detter C."/>
            <person name="Tapia R."/>
            <person name="Han S."/>
            <person name="Saunders E."/>
            <person name="Goodwin L.A."/>
            <person name="Han J."/>
            <person name="Woyke T."/>
            <person name="Pitluck S."/>
            <person name="Pennacchio L."/>
            <person name="Nolan M."/>
            <person name="Mikhailova N."/>
            <person name="Lykidis A."/>
            <person name="Land M.L."/>
            <person name="Brettin T."/>
            <person name="Stetter K.O."/>
            <person name="Nelson K.E."/>
            <person name="Gogarten J.P."/>
            <person name="Noll K.M."/>
        </authorList>
    </citation>
    <scope>NUCLEOTIDE SEQUENCE [LARGE SCALE GENOMIC DNA]</scope>
    <source>
        <strain>RQ2</strain>
    </source>
</reference>
<organism>
    <name type="scientific">Thermotoga sp. (strain RQ2)</name>
    <dbReference type="NCBI Taxonomy" id="126740"/>
    <lineage>
        <taxon>Bacteria</taxon>
        <taxon>Thermotogati</taxon>
        <taxon>Thermotogota</taxon>
        <taxon>Thermotogae</taxon>
        <taxon>Thermotogales</taxon>
        <taxon>Thermotogaceae</taxon>
        <taxon>Thermotoga</taxon>
    </lineage>
</organism>